<accession>Q113K5</accession>
<keyword id="KW-0028">Amino-acid biosynthesis</keyword>
<keyword id="KW-0413">Isomerase</keyword>
<keyword id="KW-0486">Methionine biosynthesis</keyword>
<sequence length="353" mass="39180">MIYKFRKVNPITWKNDHVVLIDQTCLPEEYKTVEISSYEEMAVAIKTMIVRGAPAIGVSVAYGMYLGARETVTNDRNEFLKQLEEIAVIFRRTRPTAVNLFWAIERILKVANKTNGTVKEIQEAVLETAKKIHQEDLETCKNIGDRAVEILPTKPEKLNILTHCNAGALATAGYGTALGVIRSAWRDGRLGKVYADETRPRLQGAKLTTWECVQENIPVTLISDNMAAHCMKQGLIHAVVVGADRIAANGDTANKIGTYSLAIVSQAHNIPLYVAAPLSTIDFKISDGSEIPIEERDTKEIYQVGETRICPKQVEFYNPAFDVTPAELITGIMTEHGTVLPGELEQFRVKQLV</sequence>
<gene>
    <name evidence="1" type="primary">mtnA</name>
    <name type="ordered locus">Tery_2078</name>
</gene>
<protein>
    <recommendedName>
        <fullName evidence="1">Methylthioribose-1-phosphate isomerase</fullName>
        <shortName evidence="1">M1Pi</shortName>
        <shortName evidence="1">MTR-1-P isomerase</shortName>
        <ecNumber evidence="1">5.3.1.23</ecNumber>
    </recommendedName>
    <alternativeName>
        <fullName evidence="1">S-methyl-5-thioribose-1-phosphate isomerase</fullName>
    </alternativeName>
</protein>
<feature type="chain" id="PRO_0000357266" description="Methylthioribose-1-phosphate isomerase">
    <location>
        <begin position="1"/>
        <end position="353"/>
    </location>
</feature>
<feature type="active site" description="Proton donor" evidence="1">
    <location>
        <position position="244"/>
    </location>
</feature>
<feature type="binding site" evidence="1">
    <location>
        <begin position="51"/>
        <end position="53"/>
    </location>
    <ligand>
        <name>substrate</name>
    </ligand>
</feature>
<feature type="binding site" evidence="1">
    <location>
        <position position="94"/>
    </location>
    <ligand>
        <name>substrate</name>
    </ligand>
</feature>
<feature type="binding site" evidence="1">
    <location>
        <position position="203"/>
    </location>
    <ligand>
        <name>substrate</name>
    </ligand>
</feature>
<feature type="binding site" evidence="1">
    <location>
        <begin position="254"/>
        <end position="255"/>
    </location>
    <ligand>
        <name>substrate</name>
    </ligand>
</feature>
<feature type="site" description="Transition state stabilizer" evidence="1">
    <location>
        <position position="164"/>
    </location>
</feature>
<organism>
    <name type="scientific">Trichodesmium erythraeum (strain IMS101)</name>
    <dbReference type="NCBI Taxonomy" id="203124"/>
    <lineage>
        <taxon>Bacteria</taxon>
        <taxon>Bacillati</taxon>
        <taxon>Cyanobacteriota</taxon>
        <taxon>Cyanophyceae</taxon>
        <taxon>Oscillatoriophycideae</taxon>
        <taxon>Oscillatoriales</taxon>
        <taxon>Microcoleaceae</taxon>
        <taxon>Trichodesmium</taxon>
    </lineage>
</organism>
<proteinExistence type="inferred from homology"/>
<reference key="1">
    <citation type="journal article" date="2015" name="Proc. Natl. Acad. Sci. U.S.A.">
        <title>Trichodesmium genome maintains abundant, widespread noncoding DNA in situ, despite oligotrophic lifestyle.</title>
        <authorList>
            <person name="Walworth N."/>
            <person name="Pfreundt U."/>
            <person name="Nelson W.C."/>
            <person name="Mincer T."/>
            <person name="Heidelberg J.F."/>
            <person name="Fu F."/>
            <person name="Waterbury J.B."/>
            <person name="Glavina del Rio T."/>
            <person name="Goodwin L."/>
            <person name="Kyrpides N.C."/>
            <person name="Land M.L."/>
            <person name="Woyke T."/>
            <person name="Hutchins D.A."/>
            <person name="Hess W.R."/>
            <person name="Webb E.A."/>
        </authorList>
    </citation>
    <scope>NUCLEOTIDE SEQUENCE [LARGE SCALE GENOMIC DNA]</scope>
    <source>
        <strain>IMS101</strain>
    </source>
</reference>
<comment type="function">
    <text evidence="1">Catalyzes the interconversion of methylthioribose-1-phosphate (MTR-1-P) into methylthioribulose-1-phosphate (MTRu-1-P).</text>
</comment>
<comment type="catalytic activity">
    <reaction evidence="1">
        <text>5-(methylsulfanyl)-alpha-D-ribose 1-phosphate = 5-(methylsulfanyl)-D-ribulose 1-phosphate</text>
        <dbReference type="Rhea" id="RHEA:19989"/>
        <dbReference type="ChEBI" id="CHEBI:58533"/>
        <dbReference type="ChEBI" id="CHEBI:58548"/>
        <dbReference type="EC" id="5.3.1.23"/>
    </reaction>
</comment>
<comment type="pathway">
    <text evidence="1">Amino-acid biosynthesis; L-methionine biosynthesis via salvage pathway; L-methionine from S-methyl-5-thio-alpha-D-ribose 1-phosphate: step 1/6.</text>
</comment>
<comment type="similarity">
    <text evidence="2">Belongs to the eIF-2B alpha/beta/delta subunits family. MtnA subfamily.</text>
</comment>
<evidence type="ECO:0000255" key="1">
    <source>
        <dbReference type="HAMAP-Rule" id="MF_01678"/>
    </source>
</evidence>
<evidence type="ECO:0000305" key="2"/>
<name>MTNA_TRIEI</name>
<dbReference type="EC" id="5.3.1.23" evidence="1"/>
<dbReference type="EMBL" id="CP000393">
    <property type="protein sequence ID" value="ABG51319.1"/>
    <property type="molecule type" value="Genomic_DNA"/>
</dbReference>
<dbReference type="RefSeq" id="WP_011611690.1">
    <property type="nucleotide sequence ID" value="NC_008312.1"/>
</dbReference>
<dbReference type="SMR" id="Q113K5"/>
<dbReference type="STRING" id="203124.Tery_2078"/>
<dbReference type="KEGG" id="ter:Tery_2078"/>
<dbReference type="eggNOG" id="COG0182">
    <property type="taxonomic scope" value="Bacteria"/>
</dbReference>
<dbReference type="HOGENOM" id="CLU_016218_1_2_3"/>
<dbReference type="OrthoDB" id="9803436at2"/>
<dbReference type="UniPathway" id="UPA00904">
    <property type="reaction ID" value="UER00874"/>
</dbReference>
<dbReference type="GO" id="GO:0046523">
    <property type="term" value="F:S-methyl-5-thioribose-1-phosphate isomerase activity"/>
    <property type="evidence" value="ECO:0007669"/>
    <property type="project" value="UniProtKB-UniRule"/>
</dbReference>
<dbReference type="GO" id="GO:0019509">
    <property type="term" value="P:L-methionine salvage from methylthioadenosine"/>
    <property type="evidence" value="ECO:0007669"/>
    <property type="project" value="UniProtKB-UniRule"/>
</dbReference>
<dbReference type="FunFam" id="1.20.120.420:FF:000003">
    <property type="entry name" value="Methylthioribose-1-phosphate isomerase"/>
    <property type="match status" value="1"/>
</dbReference>
<dbReference type="FunFam" id="3.40.50.10470:FF:000006">
    <property type="entry name" value="Methylthioribose-1-phosphate isomerase"/>
    <property type="match status" value="1"/>
</dbReference>
<dbReference type="Gene3D" id="1.20.120.420">
    <property type="entry name" value="translation initiation factor eif-2b, domain 1"/>
    <property type="match status" value="1"/>
</dbReference>
<dbReference type="Gene3D" id="3.40.50.10470">
    <property type="entry name" value="Translation initiation factor eif-2b, domain 2"/>
    <property type="match status" value="1"/>
</dbReference>
<dbReference type="HAMAP" id="MF_01678">
    <property type="entry name" value="Salvage_MtnA"/>
    <property type="match status" value="1"/>
</dbReference>
<dbReference type="InterPro" id="IPR000649">
    <property type="entry name" value="IF-2B-related"/>
</dbReference>
<dbReference type="InterPro" id="IPR005251">
    <property type="entry name" value="IF-M1Pi"/>
</dbReference>
<dbReference type="InterPro" id="IPR042529">
    <property type="entry name" value="IF_2B-like_C"/>
</dbReference>
<dbReference type="InterPro" id="IPR011559">
    <property type="entry name" value="Initiation_fac_2B_a/b/d"/>
</dbReference>
<dbReference type="InterPro" id="IPR027363">
    <property type="entry name" value="M1Pi_N"/>
</dbReference>
<dbReference type="InterPro" id="IPR037171">
    <property type="entry name" value="NagB/RpiA_transferase-like"/>
</dbReference>
<dbReference type="NCBIfam" id="TIGR00524">
    <property type="entry name" value="eIF-2B_rel"/>
    <property type="match status" value="1"/>
</dbReference>
<dbReference type="NCBIfam" id="NF004326">
    <property type="entry name" value="PRK05720.1"/>
    <property type="match status" value="1"/>
</dbReference>
<dbReference type="NCBIfam" id="TIGR00512">
    <property type="entry name" value="salvage_mtnA"/>
    <property type="match status" value="1"/>
</dbReference>
<dbReference type="PANTHER" id="PTHR43475">
    <property type="entry name" value="METHYLTHIORIBOSE-1-PHOSPHATE ISOMERASE"/>
    <property type="match status" value="1"/>
</dbReference>
<dbReference type="PANTHER" id="PTHR43475:SF1">
    <property type="entry name" value="METHYLTHIORIBOSE-1-PHOSPHATE ISOMERASE"/>
    <property type="match status" value="1"/>
</dbReference>
<dbReference type="Pfam" id="PF01008">
    <property type="entry name" value="IF-2B"/>
    <property type="match status" value="1"/>
</dbReference>
<dbReference type="SUPFAM" id="SSF100950">
    <property type="entry name" value="NagB/RpiA/CoA transferase-like"/>
    <property type="match status" value="1"/>
</dbReference>